<accession>B3QW61</accession>
<sequence length="188" mass="21402">MATTSDLAKGVILRFNGNLHILEEISHHTPGNKRGFYQAKMRNLRNGRIVENKFRSGEAVEIVSTERRKHQYLYQDGLDYVMMDGDTYEQLHISNELIGEQAKFLKESMEVDLVFTTDGEIIQAEVPVFVELEVTETDPTTKDDRANSGTKPATMETGAIIQVPMFVQNGDFIRIDTRTGEYIERAKK</sequence>
<gene>
    <name evidence="1" type="primary">efp</name>
    <name type="ordered locus">Ctha_0705</name>
</gene>
<comment type="function">
    <text evidence="1">Involved in peptide bond synthesis. Stimulates efficient translation and peptide-bond synthesis on native or reconstituted 70S ribosomes in vitro. Probably functions indirectly by altering the affinity of the ribosome for aminoacyl-tRNA, thus increasing their reactivity as acceptors for peptidyl transferase.</text>
</comment>
<comment type="pathway">
    <text evidence="1">Protein biosynthesis; polypeptide chain elongation.</text>
</comment>
<comment type="subcellular location">
    <subcellularLocation>
        <location evidence="1">Cytoplasm</location>
    </subcellularLocation>
</comment>
<comment type="similarity">
    <text evidence="1">Belongs to the elongation factor P family.</text>
</comment>
<organism>
    <name type="scientific">Chloroherpeton thalassium (strain ATCC 35110 / GB-78)</name>
    <dbReference type="NCBI Taxonomy" id="517418"/>
    <lineage>
        <taxon>Bacteria</taxon>
        <taxon>Pseudomonadati</taxon>
        <taxon>Chlorobiota</taxon>
        <taxon>Chlorobiia</taxon>
        <taxon>Chlorobiales</taxon>
        <taxon>Chloroherpetonaceae</taxon>
        <taxon>Chloroherpeton</taxon>
    </lineage>
</organism>
<protein>
    <recommendedName>
        <fullName evidence="1">Elongation factor P</fullName>
        <shortName evidence="1">EF-P</shortName>
    </recommendedName>
</protein>
<name>EFP_CHLT3</name>
<keyword id="KW-0963">Cytoplasm</keyword>
<keyword id="KW-0251">Elongation factor</keyword>
<keyword id="KW-0648">Protein biosynthesis</keyword>
<keyword id="KW-1185">Reference proteome</keyword>
<proteinExistence type="inferred from homology"/>
<evidence type="ECO:0000255" key="1">
    <source>
        <dbReference type="HAMAP-Rule" id="MF_00141"/>
    </source>
</evidence>
<feature type="chain" id="PRO_1000096136" description="Elongation factor P">
    <location>
        <begin position="1"/>
        <end position="188"/>
    </location>
</feature>
<dbReference type="EMBL" id="CP001100">
    <property type="protein sequence ID" value="ACF13174.1"/>
    <property type="molecule type" value="Genomic_DNA"/>
</dbReference>
<dbReference type="RefSeq" id="WP_012499258.1">
    <property type="nucleotide sequence ID" value="NC_011026.1"/>
</dbReference>
<dbReference type="SMR" id="B3QW61"/>
<dbReference type="STRING" id="517418.Ctha_0705"/>
<dbReference type="KEGG" id="cts:Ctha_0705"/>
<dbReference type="eggNOG" id="COG0231">
    <property type="taxonomic scope" value="Bacteria"/>
</dbReference>
<dbReference type="HOGENOM" id="CLU_074944_0_1_10"/>
<dbReference type="OrthoDB" id="9801844at2"/>
<dbReference type="UniPathway" id="UPA00345"/>
<dbReference type="Proteomes" id="UP000001208">
    <property type="component" value="Chromosome"/>
</dbReference>
<dbReference type="GO" id="GO:0005737">
    <property type="term" value="C:cytoplasm"/>
    <property type="evidence" value="ECO:0007669"/>
    <property type="project" value="UniProtKB-SubCell"/>
</dbReference>
<dbReference type="GO" id="GO:0003746">
    <property type="term" value="F:translation elongation factor activity"/>
    <property type="evidence" value="ECO:0007669"/>
    <property type="project" value="UniProtKB-UniRule"/>
</dbReference>
<dbReference type="GO" id="GO:0043043">
    <property type="term" value="P:peptide biosynthetic process"/>
    <property type="evidence" value="ECO:0007669"/>
    <property type="project" value="InterPro"/>
</dbReference>
<dbReference type="CDD" id="cd04470">
    <property type="entry name" value="S1_EF-P_repeat_1"/>
    <property type="match status" value="1"/>
</dbReference>
<dbReference type="CDD" id="cd05794">
    <property type="entry name" value="S1_EF-P_repeat_2"/>
    <property type="match status" value="1"/>
</dbReference>
<dbReference type="FunFam" id="2.40.50.140:FF:000004">
    <property type="entry name" value="Elongation factor P"/>
    <property type="match status" value="1"/>
</dbReference>
<dbReference type="FunFam" id="2.40.50.140:FF:000009">
    <property type="entry name" value="Elongation factor P"/>
    <property type="match status" value="1"/>
</dbReference>
<dbReference type="Gene3D" id="2.30.30.30">
    <property type="match status" value="1"/>
</dbReference>
<dbReference type="Gene3D" id="2.40.50.140">
    <property type="entry name" value="Nucleic acid-binding proteins"/>
    <property type="match status" value="2"/>
</dbReference>
<dbReference type="HAMAP" id="MF_00141">
    <property type="entry name" value="EF_P"/>
    <property type="match status" value="1"/>
</dbReference>
<dbReference type="InterPro" id="IPR015365">
    <property type="entry name" value="Elong-fact-P_C"/>
</dbReference>
<dbReference type="InterPro" id="IPR012340">
    <property type="entry name" value="NA-bd_OB-fold"/>
</dbReference>
<dbReference type="InterPro" id="IPR014722">
    <property type="entry name" value="Rib_uL2_dom2"/>
</dbReference>
<dbReference type="InterPro" id="IPR020599">
    <property type="entry name" value="Transl_elong_fac_P/YeiP"/>
</dbReference>
<dbReference type="InterPro" id="IPR013185">
    <property type="entry name" value="Transl_elong_KOW-like"/>
</dbReference>
<dbReference type="InterPro" id="IPR001059">
    <property type="entry name" value="Transl_elong_P/YeiP_cen"/>
</dbReference>
<dbReference type="InterPro" id="IPR013852">
    <property type="entry name" value="Transl_elong_P/YeiP_CS"/>
</dbReference>
<dbReference type="InterPro" id="IPR011768">
    <property type="entry name" value="Transl_elongation_fac_P"/>
</dbReference>
<dbReference type="InterPro" id="IPR008991">
    <property type="entry name" value="Translation_prot_SH3-like_sf"/>
</dbReference>
<dbReference type="NCBIfam" id="TIGR00038">
    <property type="entry name" value="efp"/>
    <property type="match status" value="1"/>
</dbReference>
<dbReference type="NCBIfam" id="NF001810">
    <property type="entry name" value="PRK00529.1"/>
    <property type="match status" value="1"/>
</dbReference>
<dbReference type="PANTHER" id="PTHR30053">
    <property type="entry name" value="ELONGATION FACTOR P"/>
    <property type="match status" value="1"/>
</dbReference>
<dbReference type="PANTHER" id="PTHR30053:SF12">
    <property type="entry name" value="ELONGATION FACTOR P (EF-P) FAMILY PROTEIN"/>
    <property type="match status" value="1"/>
</dbReference>
<dbReference type="Pfam" id="PF01132">
    <property type="entry name" value="EFP"/>
    <property type="match status" value="1"/>
</dbReference>
<dbReference type="Pfam" id="PF08207">
    <property type="entry name" value="EFP_N"/>
    <property type="match status" value="1"/>
</dbReference>
<dbReference type="Pfam" id="PF09285">
    <property type="entry name" value="Elong-fact-P_C"/>
    <property type="match status" value="1"/>
</dbReference>
<dbReference type="PIRSF" id="PIRSF005901">
    <property type="entry name" value="EF-P"/>
    <property type="match status" value="1"/>
</dbReference>
<dbReference type="SMART" id="SM01185">
    <property type="entry name" value="EFP"/>
    <property type="match status" value="1"/>
</dbReference>
<dbReference type="SMART" id="SM00841">
    <property type="entry name" value="Elong-fact-P_C"/>
    <property type="match status" value="1"/>
</dbReference>
<dbReference type="SUPFAM" id="SSF50249">
    <property type="entry name" value="Nucleic acid-binding proteins"/>
    <property type="match status" value="2"/>
</dbReference>
<dbReference type="SUPFAM" id="SSF50104">
    <property type="entry name" value="Translation proteins SH3-like domain"/>
    <property type="match status" value="1"/>
</dbReference>
<dbReference type="PROSITE" id="PS01275">
    <property type="entry name" value="EFP"/>
    <property type="match status" value="1"/>
</dbReference>
<reference key="1">
    <citation type="submission" date="2008-06" db="EMBL/GenBank/DDBJ databases">
        <title>Complete sequence of Chloroherpeton thalassium ATCC 35110.</title>
        <authorList>
            <consortium name="US DOE Joint Genome Institute"/>
            <person name="Lucas S."/>
            <person name="Copeland A."/>
            <person name="Lapidus A."/>
            <person name="Glavina del Rio T."/>
            <person name="Dalin E."/>
            <person name="Tice H."/>
            <person name="Bruce D."/>
            <person name="Goodwin L."/>
            <person name="Pitluck S."/>
            <person name="Schmutz J."/>
            <person name="Larimer F."/>
            <person name="Land M."/>
            <person name="Hauser L."/>
            <person name="Kyrpides N."/>
            <person name="Mikhailova N."/>
            <person name="Liu Z."/>
            <person name="Li T."/>
            <person name="Zhao F."/>
            <person name="Overmann J."/>
            <person name="Bryant D.A."/>
            <person name="Richardson P."/>
        </authorList>
    </citation>
    <scope>NUCLEOTIDE SEQUENCE [LARGE SCALE GENOMIC DNA]</scope>
    <source>
        <strain>ATCC 35110 / GB-78</strain>
    </source>
</reference>